<evidence type="ECO:0000255" key="1">
    <source>
        <dbReference type="HAMAP-Rule" id="MF_00180"/>
    </source>
</evidence>
<keyword id="KW-0456">Lyase</keyword>
<keyword id="KW-0460">Magnesium</keyword>
<keyword id="KW-0464">Manganese</keyword>
<keyword id="KW-0479">Metal-binding</keyword>
<keyword id="KW-0686">Riboflavin biosynthesis</keyword>
<accession>A4SKH7</accession>
<gene>
    <name evidence="1" type="primary">ribB</name>
    <name type="ordered locus">ASA_1293</name>
</gene>
<feature type="chain" id="PRO_1000040595" description="3,4-dihydroxy-2-butanone 4-phosphate synthase">
    <location>
        <begin position="1"/>
        <end position="217"/>
    </location>
</feature>
<feature type="binding site" evidence="1">
    <location>
        <begin position="37"/>
        <end position="38"/>
    </location>
    <ligand>
        <name>D-ribulose 5-phosphate</name>
        <dbReference type="ChEBI" id="CHEBI:58121"/>
    </ligand>
</feature>
<feature type="binding site" evidence="1">
    <location>
        <position position="38"/>
    </location>
    <ligand>
        <name>Mg(2+)</name>
        <dbReference type="ChEBI" id="CHEBI:18420"/>
        <label>1</label>
    </ligand>
</feature>
<feature type="binding site" evidence="1">
    <location>
        <position position="38"/>
    </location>
    <ligand>
        <name>Mg(2+)</name>
        <dbReference type="ChEBI" id="CHEBI:18420"/>
        <label>2</label>
    </ligand>
</feature>
<feature type="binding site" evidence="1">
    <location>
        <position position="42"/>
    </location>
    <ligand>
        <name>D-ribulose 5-phosphate</name>
        <dbReference type="ChEBI" id="CHEBI:58121"/>
    </ligand>
</feature>
<feature type="binding site" evidence="1">
    <location>
        <begin position="150"/>
        <end position="154"/>
    </location>
    <ligand>
        <name>D-ribulose 5-phosphate</name>
        <dbReference type="ChEBI" id="CHEBI:58121"/>
    </ligand>
</feature>
<feature type="binding site" evidence="1">
    <location>
        <position position="153"/>
    </location>
    <ligand>
        <name>Mg(2+)</name>
        <dbReference type="ChEBI" id="CHEBI:18420"/>
        <label>2</label>
    </ligand>
</feature>
<feature type="binding site" evidence="1">
    <location>
        <position position="174"/>
    </location>
    <ligand>
        <name>D-ribulose 5-phosphate</name>
        <dbReference type="ChEBI" id="CHEBI:58121"/>
    </ligand>
</feature>
<feature type="site" description="Essential for catalytic activity" evidence="1">
    <location>
        <position position="136"/>
    </location>
</feature>
<feature type="site" description="Essential for catalytic activity" evidence="1">
    <location>
        <position position="174"/>
    </location>
</feature>
<reference key="1">
    <citation type="journal article" date="2008" name="BMC Genomics">
        <title>The genome of Aeromonas salmonicida subsp. salmonicida A449: insights into the evolution of a fish pathogen.</title>
        <authorList>
            <person name="Reith M.E."/>
            <person name="Singh R.K."/>
            <person name="Curtis B."/>
            <person name="Boyd J.M."/>
            <person name="Bouevitch A."/>
            <person name="Kimball J."/>
            <person name="Munholland J."/>
            <person name="Murphy C."/>
            <person name="Sarty D."/>
            <person name="Williams J."/>
            <person name="Nash J.H."/>
            <person name="Johnson S.C."/>
            <person name="Brown L.L."/>
        </authorList>
    </citation>
    <scope>NUCLEOTIDE SEQUENCE [LARGE SCALE GENOMIC DNA]</scope>
    <source>
        <strain>A449</strain>
    </source>
</reference>
<organism>
    <name type="scientific">Aeromonas salmonicida (strain A449)</name>
    <dbReference type="NCBI Taxonomy" id="382245"/>
    <lineage>
        <taxon>Bacteria</taxon>
        <taxon>Pseudomonadati</taxon>
        <taxon>Pseudomonadota</taxon>
        <taxon>Gammaproteobacteria</taxon>
        <taxon>Aeromonadales</taxon>
        <taxon>Aeromonadaceae</taxon>
        <taxon>Aeromonas</taxon>
    </lineage>
</organism>
<dbReference type="EC" id="4.1.99.12" evidence="1"/>
<dbReference type="EMBL" id="CP000644">
    <property type="protein sequence ID" value="ABO89399.1"/>
    <property type="molecule type" value="Genomic_DNA"/>
</dbReference>
<dbReference type="RefSeq" id="WP_005316761.1">
    <property type="nucleotide sequence ID" value="NC_009348.1"/>
</dbReference>
<dbReference type="SMR" id="A4SKH7"/>
<dbReference type="STRING" id="29491.GCA_000820065_01105"/>
<dbReference type="GeneID" id="79878941"/>
<dbReference type="KEGG" id="asa:ASA_1293"/>
<dbReference type="eggNOG" id="COG0108">
    <property type="taxonomic scope" value="Bacteria"/>
</dbReference>
<dbReference type="HOGENOM" id="CLU_020273_3_0_6"/>
<dbReference type="UniPathway" id="UPA00275">
    <property type="reaction ID" value="UER00399"/>
</dbReference>
<dbReference type="Proteomes" id="UP000000225">
    <property type="component" value="Chromosome"/>
</dbReference>
<dbReference type="GO" id="GO:0005829">
    <property type="term" value="C:cytosol"/>
    <property type="evidence" value="ECO:0007669"/>
    <property type="project" value="TreeGrafter"/>
</dbReference>
<dbReference type="GO" id="GO:0008686">
    <property type="term" value="F:3,4-dihydroxy-2-butanone-4-phosphate synthase activity"/>
    <property type="evidence" value="ECO:0007669"/>
    <property type="project" value="UniProtKB-UniRule"/>
</dbReference>
<dbReference type="GO" id="GO:0000287">
    <property type="term" value="F:magnesium ion binding"/>
    <property type="evidence" value="ECO:0007669"/>
    <property type="project" value="UniProtKB-UniRule"/>
</dbReference>
<dbReference type="GO" id="GO:0030145">
    <property type="term" value="F:manganese ion binding"/>
    <property type="evidence" value="ECO:0007669"/>
    <property type="project" value="UniProtKB-UniRule"/>
</dbReference>
<dbReference type="GO" id="GO:0009231">
    <property type="term" value="P:riboflavin biosynthetic process"/>
    <property type="evidence" value="ECO:0007669"/>
    <property type="project" value="UniProtKB-UniRule"/>
</dbReference>
<dbReference type="FunFam" id="3.90.870.10:FF:000002">
    <property type="entry name" value="3,4-dihydroxy-2-butanone 4-phosphate synthase"/>
    <property type="match status" value="1"/>
</dbReference>
<dbReference type="Gene3D" id="3.90.870.10">
    <property type="entry name" value="DHBP synthase"/>
    <property type="match status" value="1"/>
</dbReference>
<dbReference type="HAMAP" id="MF_00180">
    <property type="entry name" value="RibB"/>
    <property type="match status" value="1"/>
</dbReference>
<dbReference type="InterPro" id="IPR017945">
    <property type="entry name" value="DHBP_synth_RibB-like_a/b_dom"/>
</dbReference>
<dbReference type="InterPro" id="IPR000422">
    <property type="entry name" value="DHBP_synthase_RibB"/>
</dbReference>
<dbReference type="NCBIfam" id="TIGR00506">
    <property type="entry name" value="ribB"/>
    <property type="match status" value="1"/>
</dbReference>
<dbReference type="PANTHER" id="PTHR21327:SF38">
    <property type="entry name" value="3,4-DIHYDROXY-2-BUTANONE 4-PHOSPHATE SYNTHASE"/>
    <property type="match status" value="1"/>
</dbReference>
<dbReference type="PANTHER" id="PTHR21327">
    <property type="entry name" value="GTP CYCLOHYDROLASE II-RELATED"/>
    <property type="match status" value="1"/>
</dbReference>
<dbReference type="Pfam" id="PF00926">
    <property type="entry name" value="DHBP_synthase"/>
    <property type="match status" value="1"/>
</dbReference>
<dbReference type="SUPFAM" id="SSF55821">
    <property type="entry name" value="YrdC/RibB"/>
    <property type="match status" value="1"/>
</dbReference>
<protein>
    <recommendedName>
        <fullName evidence="1">3,4-dihydroxy-2-butanone 4-phosphate synthase</fullName>
        <shortName evidence="1">DHBP synthase</shortName>
        <ecNumber evidence="1">4.1.99.12</ecNumber>
    </recommendedName>
</protein>
<sequence length="217" mass="23535">MNQSLLSEFGDPLARVEAALAALRAGRGVLVADDEDRENEGDLIFAAQTMTNEQMAMMIRECSGIVCLCLTDERVRQLALPMMVEANSSHYQTAFTVTIEAAQGVTTGVSAADRITTIRAAIADGAKPSDLHRPGHVFPLRARTGGVLTRRGHTEATVDLMQLAGLKPFGVLCELTKEDGSMARLPDLVAFGRLHQMPVLTIEDLVQYRQLLSERSA</sequence>
<proteinExistence type="inferred from homology"/>
<comment type="function">
    <text evidence="1">Catalyzes the conversion of D-ribulose 5-phosphate to formate and 3,4-dihydroxy-2-butanone 4-phosphate.</text>
</comment>
<comment type="catalytic activity">
    <reaction evidence="1">
        <text>D-ribulose 5-phosphate = (2S)-2-hydroxy-3-oxobutyl phosphate + formate + H(+)</text>
        <dbReference type="Rhea" id="RHEA:18457"/>
        <dbReference type="ChEBI" id="CHEBI:15378"/>
        <dbReference type="ChEBI" id="CHEBI:15740"/>
        <dbReference type="ChEBI" id="CHEBI:58121"/>
        <dbReference type="ChEBI" id="CHEBI:58830"/>
        <dbReference type="EC" id="4.1.99.12"/>
    </reaction>
</comment>
<comment type="cofactor">
    <cofactor evidence="1">
        <name>Mg(2+)</name>
        <dbReference type="ChEBI" id="CHEBI:18420"/>
    </cofactor>
    <cofactor evidence="1">
        <name>Mn(2+)</name>
        <dbReference type="ChEBI" id="CHEBI:29035"/>
    </cofactor>
    <text evidence="1">Binds 2 divalent metal cations per subunit. Magnesium or manganese.</text>
</comment>
<comment type="pathway">
    <text evidence="1">Cofactor biosynthesis; riboflavin biosynthesis; 2-hydroxy-3-oxobutyl phosphate from D-ribulose 5-phosphate: step 1/1.</text>
</comment>
<comment type="subunit">
    <text evidence="1">Homodimer.</text>
</comment>
<comment type="similarity">
    <text evidence="1">Belongs to the DHBP synthase family.</text>
</comment>
<name>RIBB_AERS4</name>